<sequence length="524" mass="60800">MGCSQSSNVKDFKTRRSKFTNGNNYGKSGNNKNSEDLAINPGMYVRKKEGKIGESYFKVRKLGSGAYGEVLLCREKHGHGEKAIKVIKKSQFDKMKYSITNKIECDDKIHEEIYNEISLLKSLDHPNIIKLFDVFEDKKYFYLVTEFYEGGELFEQIINRHKFDECDAANIMKQILSGICYLHKHNIVHRDIKPENILLENKHSLLNIKIVDFGLSSFFSKDNKLRDRLGTAYYIAPEVLRKKYNEKCDVWSCGVILYILLCGYPPFGGQNDQDIIKKVEKGKYYFDFNDWKNISEEAKELIKLMLTYDYNKRITAKEALNSKWIKKYANNINKSDQKTLCGALSNMRKFEGSQKLAQAAILFIGSKLTTLEERKELTDIFKKLDKNGDGQLDKKELIEGYNILRSFKNELGELKNVEEEVDNILKEVDFDKNGYIEYSEFISVCMDKQILFSEERLRDAFNLFDTDKSGKITKEELANLFGLTSISEQMWNEVLGEADKNKDNMIDFDEFVNMMHKICDNKSS</sequence>
<dbReference type="EC" id="2.7.11.1" evidence="8 9"/>
<dbReference type="EMBL" id="X67288">
    <property type="protein sequence ID" value="CAA47704.1"/>
    <property type="molecule type" value="mRNA"/>
</dbReference>
<dbReference type="SMR" id="P62343"/>
<dbReference type="BindingDB" id="P62343"/>
<dbReference type="GO" id="GO:0005737">
    <property type="term" value="C:cytoplasm"/>
    <property type="evidence" value="ECO:0007669"/>
    <property type="project" value="UniProtKB-SubCell"/>
</dbReference>
<dbReference type="GO" id="GO:0020002">
    <property type="term" value="C:host cell plasma membrane"/>
    <property type="evidence" value="ECO:0007669"/>
    <property type="project" value="UniProtKB-SubCell"/>
</dbReference>
<dbReference type="GO" id="GO:0031514">
    <property type="term" value="C:motile cilium"/>
    <property type="evidence" value="ECO:0007669"/>
    <property type="project" value="UniProtKB-SubCell"/>
</dbReference>
<dbReference type="GO" id="GO:0005886">
    <property type="term" value="C:plasma membrane"/>
    <property type="evidence" value="ECO:0007669"/>
    <property type="project" value="UniProtKB-SubCell"/>
</dbReference>
<dbReference type="GO" id="GO:0020005">
    <property type="term" value="C:symbiont-containing vacuole membrane"/>
    <property type="evidence" value="ECO:0007669"/>
    <property type="project" value="UniProtKB-SubCell"/>
</dbReference>
<dbReference type="GO" id="GO:0005524">
    <property type="term" value="F:ATP binding"/>
    <property type="evidence" value="ECO:0007669"/>
    <property type="project" value="UniProtKB-KW"/>
</dbReference>
<dbReference type="GO" id="GO:0005509">
    <property type="term" value="F:calcium ion binding"/>
    <property type="evidence" value="ECO:0007669"/>
    <property type="project" value="InterPro"/>
</dbReference>
<dbReference type="GO" id="GO:0009931">
    <property type="term" value="F:calcium-dependent protein serine/threonine kinase activity"/>
    <property type="evidence" value="ECO:0007669"/>
    <property type="project" value="UniProtKB-ARBA"/>
</dbReference>
<dbReference type="GO" id="GO:0106310">
    <property type="term" value="F:protein serine kinase activity"/>
    <property type="evidence" value="ECO:0007669"/>
    <property type="project" value="RHEA"/>
</dbReference>
<dbReference type="CDD" id="cd00051">
    <property type="entry name" value="EFh"/>
    <property type="match status" value="1"/>
</dbReference>
<dbReference type="CDD" id="cd05117">
    <property type="entry name" value="STKc_CAMK"/>
    <property type="match status" value="1"/>
</dbReference>
<dbReference type="FunFam" id="1.10.510.10:FF:000398">
    <property type="entry name" value="Calcium-dependent protein kinase 1"/>
    <property type="match status" value="1"/>
</dbReference>
<dbReference type="FunFam" id="3.30.200.20:FF:000696">
    <property type="entry name" value="Calcium-dependent protein kinase 1"/>
    <property type="match status" value="1"/>
</dbReference>
<dbReference type="FunFam" id="1.10.238.10:FF:000001">
    <property type="entry name" value="Calmodulin 1"/>
    <property type="match status" value="1"/>
</dbReference>
<dbReference type="Gene3D" id="1.10.238.10">
    <property type="entry name" value="EF-hand"/>
    <property type="match status" value="2"/>
</dbReference>
<dbReference type="Gene3D" id="3.30.200.20">
    <property type="entry name" value="Phosphorylase Kinase, domain 1"/>
    <property type="match status" value="1"/>
</dbReference>
<dbReference type="Gene3D" id="1.10.510.10">
    <property type="entry name" value="Transferase(Phosphotransferase) domain 1"/>
    <property type="match status" value="1"/>
</dbReference>
<dbReference type="InterPro" id="IPR050205">
    <property type="entry name" value="CDPK_Ser/Thr_kinases"/>
</dbReference>
<dbReference type="InterPro" id="IPR011992">
    <property type="entry name" value="EF-hand-dom_pair"/>
</dbReference>
<dbReference type="InterPro" id="IPR018247">
    <property type="entry name" value="EF_Hand_1_Ca_BS"/>
</dbReference>
<dbReference type="InterPro" id="IPR002048">
    <property type="entry name" value="EF_hand_dom"/>
</dbReference>
<dbReference type="InterPro" id="IPR011009">
    <property type="entry name" value="Kinase-like_dom_sf"/>
</dbReference>
<dbReference type="InterPro" id="IPR000719">
    <property type="entry name" value="Prot_kinase_dom"/>
</dbReference>
<dbReference type="InterPro" id="IPR017441">
    <property type="entry name" value="Protein_kinase_ATP_BS"/>
</dbReference>
<dbReference type="InterPro" id="IPR008271">
    <property type="entry name" value="Ser/Thr_kinase_AS"/>
</dbReference>
<dbReference type="PANTHER" id="PTHR24349">
    <property type="entry name" value="SERINE/THREONINE-PROTEIN KINASE"/>
    <property type="match status" value="1"/>
</dbReference>
<dbReference type="Pfam" id="PF13499">
    <property type="entry name" value="EF-hand_7"/>
    <property type="match status" value="2"/>
</dbReference>
<dbReference type="Pfam" id="PF00069">
    <property type="entry name" value="Pkinase"/>
    <property type="match status" value="1"/>
</dbReference>
<dbReference type="SMART" id="SM00054">
    <property type="entry name" value="EFh"/>
    <property type="match status" value="4"/>
</dbReference>
<dbReference type="SMART" id="SM00220">
    <property type="entry name" value="S_TKc"/>
    <property type="match status" value="1"/>
</dbReference>
<dbReference type="SUPFAM" id="SSF47473">
    <property type="entry name" value="EF-hand"/>
    <property type="match status" value="1"/>
</dbReference>
<dbReference type="SUPFAM" id="SSF56112">
    <property type="entry name" value="Protein kinase-like (PK-like)"/>
    <property type="match status" value="1"/>
</dbReference>
<dbReference type="PROSITE" id="PS00018">
    <property type="entry name" value="EF_HAND_1"/>
    <property type="match status" value="4"/>
</dbReference>
<dbReference type="PROSITE" id="PS50222">
    <property type="entry name" value="EF_HAND_2"/>
    <property type="match status" value="4"/>
</dbReference>
<dbReference type="PROSITE" id="PS00107">
    <property type="entry name" value="PROTEIN_KINASE_ATP"/>
    <property type="match status" value="1"/>
</dbReference>
<dbReference type="PROSITE" id="PS50011">
    <property type="entry name" value="PROTEIN_KINASE_DOM"/>
    <property type="match status" value="1"/>
</dbReference>
<dbReference type="PROSITE" id="PS00108">
    <property type="entry name" value="PROTEIN_KINASE_ST"/>
    <property type="match status" value="1"/>
</dbReference>
<evidence type="ECO:0000250" key="1">
    <source>
        <dbReference type="UniProtKB" id="A0A2I0BVG8"/>
    </source>
</evidence>
<evidence type="ECO:0000250" key="2">
    <source>
        <dbReference type="UniProtKB" id="P62344"/>
    </source>
</evidence>
<evidence type="ECO:0000255" key="3">
    <source>
        <dbReference type="PROSITE-ProRule" id="PRU00159"/>
    </source>
</evidence>
<evidence type="ECO:0000255" key="4">
    <source>
        <dbReference type="PROSITE-ProRule" id="PRU00448"/>
    </source>
</evidence>
<evidence type="ECO:0000255" key="5">
    <source>
        <dbReference type="PROSITE-ProRule" id="PRU10027"/>
    </source>
</evidence>
<evidence type="ECO:0000256" key="6">
    <source>
        <dbReference type="SAM" id="MobiDB-lite"/>
    </source>
</evidence>
<evidence type="ECO:0000269" key="7">
    <source>
    </source>
</evidence>
<evidence type="ECO:0000269" key="8">
    <source>
    </source>
</evidence>
<evidence type="ECO:0000269" key="9">
    <source>
    </source>
</evidence>
<comment type="function">
    <text evidence="1 2 7">Calcium-dependent protein kinase which acts as a sensor and effector of intracellular Ca(2+) levels probably in part downstream of cGMP-activated PKG kinase (PubMed:7808482). By phosphorylating various proteins, required for microneme secretion and thus merozoite egress from and invasion of host erythrocytes (By similarity). During gametogenesis, essential for the development of both male and female gametes (By similarity). Phosphorylates SERA5 p50 which enhances SERA5 p50 protease activity; however, SERA5 p50 protease activity has been shown in other studies to be controversial. Probably by phosphorylating SERA5 p50, plays a role in merozoite egress from host erythrocytes. Probably prior or during merozoite invasion of host erythrocytes, phosphorylates rhoptry protein RhopH3 which is required for RhopH3 localization to rhoptries and for its secretion. Probably in late schizonts, phosphorylates myosin A tail domain-interacting protein MTIP and glideosome-associated protein 45 GAP45, both of which are components of the motor complex that generates the force required by the parasite to invade host cells. In late schizonts, phosphorylates inner membrane complex protein IMC1g. In late schizonts, phosphorylates PKA regulatory subunit PKAr in a calcium-dependent manner, which may contribute to the dissociation of regulatory PKAr and catalytic PKAc subunits and promote the activation of PKAc. May phosphorylate raf kinase inhibitory protein RKIP which in turn may regulate CDPK1 catalytic activity (By similarity). May phosphorylate proteins of the host erythrocyte membranes (PubMed:7808482).</text>
</comment>
<comment type="catalytic activity">
    <reaction evidence="8 9">
        <text>L-seryl-[protein] + ATP = O-phospho-L-seryl-[protein] + ADP + H(+)</text>
        <dbReference type="Rhea" id="RHEA:17989"/>
        <dbReference type="Rhea" id="RHEA-COMP:9863"/>
        <dbReference type="Rhea" id="RHEA-COMP:11604"/>
        <dbReference type="ChEBI" id="CHEBI:15378"/>
        <dbReference type="ChEBI" id="CHEBI:29999"/>
        <dbReference type="ChEBI" id="CHEBI:30616"/>
        <dbReference type="ChEBI" id="CHEBI:83421"/>
        <dbReference type="ChEBI" id="CHEBI:456216"/>
        <dbReference type="EC" id="2.7.11.1"/>
    </reaction>
</comment>
<comment type="catalytic activity">
    <reaction evidence="8 9">
        <text>L-threonyl-[protein] + ATP = O-phospho-L-threonyl-[protein] + ADP + H(+)</text>
        <dbReference type="Rhea" id="RHEA:46608"/>
        <dbReference type="Rhea" id="RHEA-COMP:11060"/>
        <dbReference type="Rhea" id="RHEA-COMP:11605"/>
        <dbReference type="ChEBI" id="CHEBI:15378"/>
        <dbReference type="ChEBI" id="CHEBI:30013"/>
        <dbReference type="ChEBI" id="CHEBI:30616"/>
        <dbReference type="ChEBI" id="CHEBI:61977"/>
        <dbReference type="ChEBI" id="CHEBI:456216"/>
        <dbReference type="EC" id="2.7.11.1"/>
    </reaction>
</comment>
<comment type="cofactor">
    <cofactor evidence="7">
        <name>Mg(2+)</name>
        <dbReference type="ChEBI" id="CHEBI:18420"/>
    </cofactor>
    <text evidence="7">Can use both Mg(2+) and Mn(2+) in vitro and shows higher activity with Mn(2+) but Mg(2+) is likely to be the in vivo cofactor.</text>
</comment>
<comment type="activity regulation">
    <text evidence="2 7 8 9">Activated by calcium (PubMed:7808482, PubMed:8142371, PubMed:8440720). Upon calcium binding to the EF-hand domains, the C-terminus of the junction domain (J domain) undergoes a conformational change which results in the dissociation of the pseudo-substrate inhibitory motif from the catalytic domain (By similarity). This, in turn may facilitate the autophosphorylation of the activation loop at Thr-231, which leads to the kinase activation (By similarity). Inhibited by calmodulin antagonists such as calmidazolium, trifluoperazine, N-[6-aminohexyl]-5-chloro-1-naphthalene-sulfonamide, and ophiobolin A (PubMed:7808482).</text>
</comment>
<comment type="subunit">
    <text evidence="2">Monomer. Forms a high molecular weight (250 and 400 kDa) complex. Forms a complex composed of CDPK1, PKA regulatory subunit PKAr and 14-3-3I; the complex is formed in merozoites in response to low extracellular level of K(+) and may play a role in microneme secretion. Interacts (when phosphorylated) with 14-3-3I in a Ca(2+)-independent manner; the interaction does not regulate CDPK1 catalytic activity but is required for merozoite invasion of host erythrocytes. Interacts with PKA regulatory subunit PKAr; in a Ca(2+)-dependent manner. Interacts with SERA5 p50 in the late schizont stage. Interacts with inner membrane complex protein IMC1g in late schizonts. Interacts with rhoptry protein RhopH3 in merozoites.</text>
</comment>
<comment type="subcellular location">
    <subcellularLocation>
        <location evidence="7">Membrane</location>
        <topology evidence="7">Lipid-anchor</topology>
    </subcellularLocation>
    <subcellularLocation>
        <location evidence="2">Cell membrane</location>
        <topology evidence="2">Lipid-anchor</topology>
        <orientation evidence="2">Cytoplasmic side</orientation>
    </subcellularLocation>
    <subcellularLocation>
        <location evidence="2">Parasitophorous vacuole membrane</location>
        <topology evidence="2">Lipid-anchor</topology>
    </subcellularLocation>
    <subcellularLocation>
        <location evidence="1">Cytoplasm</location>
    </subcellularLocation>
    <subcellularLocation>
        <location evidence="1">Cell projection</location>
        <location evidence="1">Cilium</location>
        <location evidence="1">Flagellum</location>
    </subcellularLocation>
    <subcellularLocation>
        <location evidence="2">Host cell membrane</location>
        <topology evidence="2">Lipid-anchor</topology>
    </subcellularLocation>
    <text evidence="1 2 7">Localizes to the host erythrocytic membrane at low level (PubMed:7808482). Localizes to the cell membrane in the nascent merozoites contained within the late-stage schizonts and in free merozoites. Colocalizes with MTIP around developing merozoites in segmented schizonts, also localizes in membranes around the mature food vacuole/residual body of the schizonts. Ser-64 phosphorylated form localizes at the apical pole in punctate structures in merozoites within late schizonts in free merozoites. In trophozoites and schizonts, localizes to the parasitophorous vacuole (PV) and in membranous systems derived from the PV including intraparasitic vacuoles and the tubovesicular system, an extension of the parasitophorous vacuole membrane into the host cell cytoplasm. Localization to the cytoplasm in trophozoite or schizonts is minimal (By similarity). In female stage V gametocytes and gametes, localizes to the cell membrane. In stage V male gametocytes, localizes to the cell membrane and in the cytoplasm. In male gametes, localizes to the residual body, cell membrane and in the flagella (By similarity). Calcium and/or autophosphorylation does not affect membrane localization (By similarity).</text>
</comment>
<comment type="developmental stage">
    <text evidence="7">Expressed in ring and schizont stages and to a lesser extent in early and late trophozoite stages.</text>
</comment>
<comment type="domain">
    <text evidence="2">The junction domain (J domain) is composed of 2 motifs that maintain the kinase inactive. The N-terminal autoinhibitory motif acts as a pseudosubstrate inhibiting the catalytic domain while the C-terminal motif binds the EF-hand domains.</text>
</comment>
<comment type="PTM">
    <text evidence="2">Myristoylated. Myristoylation, palmitoylation and the basic cluster motif are required for the localization to the parasitophorous vacuole membrane.</text>
</comment>
<comment type="PTM">
    <text evidence="2">Palmitoylated. Palmitoylation increases in merozoites in response to low level of extracellular K(+) in the host blood. Myristoylation, palmitoylation and the basic cluster motif are required for the localization to the parasitophorous vacuole membrane.</text>
</comment>
<comment type="PTM">
    <text evidence="2 7">Phosphorylation at Ser-64 occurs at late schizont stage and regulates CDPK1 protein-protein interaction. Phosphorylated at Ser-28, Ser-34 and Ser-64 in merozoites in response to low extracellular level of K(+). Phosphorylation at Thr-231 may regulate CDPK1 kinase activity. Phosphorylation increases in response to an increase in intracellular Ca(2+) levels (By similarity). Autophosphorylated in vitro (PubMed:7808482). Autophosphorylation does not affect membrane localization in vitro (By similarity).</text>
</comment>
<comment type="similarity">
    <text evidence="3">Belongs to the protein kinase superfamily. Ser/Thr protein kinase family. CDPK subfamily.</text>
</comment>
<gene>
    <name evidence="2" type="primary">CDPK1</name>
    <name type="synonym">CPK1</name>
</gene>
<reference key="1">
    <citation type="journal article" date="1993" name="J. Biol. Chem.">
        <title>Gene structure and expression of an unusual protein kinase from Plasmodium falciparum homologous at its carboxyl terminus with the EF hand calcium-binding proteins.</title>
        <authorList>
            <person name="Zhao Y."/>
            <person name="Kappes B."/>
            <person name="Franklin R.M."/>
        </authorList>
    </citation>
    <scope>NUCLEOTIDE SEQUENCE [MRNA]</scope>
    <scope>CATALYTIC ACTIVITY</scope>
    <scope>ACTIVITY REGULATION</scope>
</reference>
<reference key="2">
    <citation type="journal article" date="1994" name="Biochemistry">
        <title>Calcium-binding properties of a calcium-dependent protein kinase from Plasmodium falciparum and the significance of individual calcium-binding sites for kinase activation.</title>
        <authorList>
            <person name="Zhao Y."/>
            <person name="Pokutta S."/>
            <person name="Maurer P."/>
            <person name="Lindt M."/>
            <person name="Franklin R.M."/>
            <person name="Kappes B."/>
        </authorList>
    </citation>
    <scope>CATALYTIC ACTIVITY</scope>
    <scope>ACTIVITY REGULATION</scope>
    <scope>CALCIUM-BINDING</scope>
    <scope>MUTAGENESIS OF GLU-396; GLU-440; GLU-476 AND GLU-510</scope>
</reference>
<reference key="3">
    <citation type="journal article" date="1994" name="Mol. Biochem. Parasitol.">
        <title>Plasmodium falciparum calcium-dependent protein kinase phosphorylates proteins of the host erythrocytic membrane.</title>
        <authorList>
            <person name="Zhao Y."/>
            <person name="Franklin R.M."/>
            <person name="Kappes B."/>
        </authorList>
    </citation>
    <scope>FUNCTION</scope>
    <scope>CATALYTIC ACTIVITY</scope>
    <scope>COFACTOR</scope>
    <scope>ACTIVITY REGULATION</scope>
    <scope>SUBCELLULAR LOCATION</scope>
    <scope>DEVELOPMENTAL STAGE</scope>
    <scope>AUTOPHOSPHORYLATION</scope>
</reference>
<name>CDPK1_PLAFK</name>
<proteinExistence type="evidence at protein level"/>
<feature type="initiator methionine" description="Removed" evidence="2">
    <location>
        <position position="1"/>
    </location>
</feature>
<feature type="chain" id="PRO_0000085835" description="Calcium-dependent protein kinase 1">
    <location>
        <begin position="2"/>
        <end position="524"/>
    </location>
</feature>
<feature type="domain" description="Protein kinase" evidence="3">
    <location>
        <begin position="56"/>
        <end position="325"/>
    </location>
</feature>
<feature type="domain" description="EF-hand 1" evidence="4">
    <location>
        <begin position="372"/>
        <end position="407"/>
    </location>
</feature>
<feature type="domain" description="EF-hand 2" evidence="4">
    <location>
        <begin position="416"/>
        <end position="451"/>
    </location>
</feature>
<feature type="domain" description="EF-hand 3" evidence="4">
    <location>
        <begin position="452"/>
        <end position="487"/>
    </location>
</feature>
<feature type="domain" description="EF-hand 4" evidence="4">
    <location>
        <begin position="488"/>
        <end position="521"/>
    </location>
</feature>
<feature type="region of interest" description="Disordered" evidence="6">
    <location>
        <begin position="1"/>
        <end position="34"/>
    </location>
</feature>
<feature type="region of interest" description="J domain" evidence="2">
    <location>
        <begin position="346"/>
        <end position="364"/>
    </location>
</feature>
<feature type="short sequence motif" description="J domain basic cluster involved in membrane binding" evidence="2">
    <location>
        <begin position="10"/>
        <end position="20"/>
    </location>
</feature>
<feature type="short sequence motif" description="J domain autoinhibitory motif" evidence="2">
    <location>
        <begin position="346"/>
        <end position="353"/>
    </location>
</feature>
<feature type="short sequence motif" description="Interacts with the EF-hand domains" evidence="2">
    <location>
        <begin position="354"/>
        <end position="364"/>
    </location>
</feature>
<feature type="compositionally biased region" description="Low complexity" evidence="6">
    <location>
        <begin position="21"/>
        <end position="32"/>
    </location>
</feature>
<feature type="active site" description="Proton acceptor" evidence="3 5">
    <location>
        <position position="191"/>
    </location>
</feature>
<feature type="binding site" evidence="3">
    <location>
        <begin position="62"/>
        <end position="70"/>
    </location>
    <ligand>
        <name>ATP</name>
        <dbReference type="ChEBI" id="CHEBI:30616"/>
    </ligand>
</feature>
<feature type="binding site" evidence="3">
    <location>
        <position position="85"/>
    </location>
    <ligand>
        <name>ATP</name>
        <dbReference type="ChEBI" id="CHEBI:30616"/>
    </ligand>
</feature>
<feature type="binding site" evidence="4">
    <location>
        <position position="385"/>
    </location>
    <ligand>
        <name>Ca(2+)</name>
        <dbReference type="ChEBI" id="CHEBI:29108"/>
        <label>1</label>
    </ligand>
</feature>
<feature type="binding site" evidence="4">
    <location>
        <position position="387"/>
    </location>
    <ligand>
        <name>Ca(2+)</name>
        <dbReference type="ChEBI" id="CHEBI:29108"/>
        <label>1</label>
    </ligand>
</feature>
<feature type="binding site" evidence="4">
    <location>
        <position position="389"/>
    </location>
    <ligand>
        <name>Ca(2+)</name>
        <dbReference type="ChEBI" id="CHEBI:29108"/>
        <label>1</label>
    </ligand>
</feature>
<feature type="binding site" evidence="4">
    <location>
        <position position="391"/>
    </location>
    <ligand>
        <name>Ca(2+)</name>
        <dbReference type="ChEBI" id="CHEBI:29108"/>
        <label>1</label>
    </ligand>
</feature>
<feature type="binding site" evidence="4">
    <location>
        <position position="396"/>
    </location>
    <ligand>
        <name>Ca(2+)</name>
        <dbReference type="ChEBI" id="CHEBI:29108"/>
        <label>1</label>
    </ligand>
</feature>
<feature type="binding site" evidence="4">
    <location>
        <position position="429"/>
    </location>
    <ligand>
        <name>Ca(2+)</name>
        <dbReference type="ChEBI" id="CHEBI:29108"/>
        <label>2</label>
    </ligand>
</feature>
<feature type="binding site" evidence="4">
    <location>
        <position position="431"/>
    </location>
    <ligand>
        <name>Ca(2+)</name>
        <dbReference type="ChEBI" id="CHEBI:29108"/>
        <label>2</label>
    </ligand>
</feature>
<feature type="binding site" evidence="4">
    <location>
        <position position="433"/>
    </location>
    <ligand>
        <name>Ca(2+)</name>
        <dbReference type="ChEBI" id="CHEBI:29108"/>
        <label>2</label>
    </ligand>
</feature>
<feature type="binding site" evidence="4">
    <location>
        <position position="435"/>
    </location>
    <ligand>
        <name>Ca(2+)</name>
        <dbReference type="ChEBI" id="CHEBI:29108"/>
        <label>2</label>
    </ligand>
</feature>
<feature type="binding site" evidence="4">
    <location>
        <position position="440"/>
    </location>
    <ligand>
        <name>Ca(2+)</name>
        <dbReference type="ChEBI" id="CHEBI:29108"/>
        <label>2</label>
    </ligand>
</feature>
<feature type="binding site" evidence="4">
    <location>
        <position position="465"/>
    </location>
    <ligand>
        <name>Ca(2+)</name>
        <dbReference type="ChEBI" id="CHEBI:29108"/>
        <label>3</label>
    </ligand>
</feature>
<feature type="binding site" evidence="4">
    <location>
        <position position="467"/>
    </location>
    <ligand>
        <name>Ca(2+)</name>
        <dbReference type="ChEBI" id="CHEBI:29108"/>
        <label>3</label>
    </ligand>
</feature>
<feature type="binding site" evidence="4">
    <location>
        <position position="469"/>
    </location>
    <ligand>
        <name>Ca(2+)</name>
        <dbReference type="ChEBI" id="CHEBI:29108"/>
        <label>3</label>
    </ligand>
</feature>
<feature type="binding site" evidence="4">
    <location>
        <position position="471"/>
    </location>
    <ligand>
        <name>Ca(2+)</name>
        <dbReference type="ChEBI" id="CHEBI:29108"/>
        <label>3</label>
    </ligand>
</feature>
<feature type="binding site" evidence="4">
    <location>
        <position position="476"/>
    </location>
    <ligand>
        <name>Ca(2+)</name>
        <dbReference type="ChEBI" id="CHEBI:29108"/>
        <label>3</label>
    </ligand>
</feature>
<feature type="binding site" evidence="4">
    <location>
        <position position="499"/>
    </location>
    <ligand>
        <name>Ca(2+)</name>
        <dbReference type="ChEBI" id="CHEBI:29108"/>
        <label>4</label>
    </ligand>
</feature>
<feature type="binding site" evidence="4">
    <location>
        <position position="501"/>
    </location>
    <ligand>
        <name>Ca(2+)</name>
        <dbReference type="ChEBI" id="CHEBI:29108"/>
        <label>4</label>
    </ligand>
</feature>
<feature type="binding site" evidence="4">
    <location>
        <position position="503"/>
    </location>
    <ligand>
        <name>Ca(2+)</name>
        <dbReference type="ChEBI" id="CHEBI:29108"/>
        <label>4</label>
    </ligand>
</feature>
<feature type="binding site" evidence="4">
    <location>
        <position position="505"/>
    </location>
    <ligand>
        <name>Ca(2+)</name>
        <dbReference type="ChEBI" id="CHEBI:29108"/>
        <label>4</label>
    </ligand>
</feature>
<feature type="binding site" evidence="4">
    <location>
        <position position="510"/>
    </location>
    <ligand>
        <name>Ca(2+)</name>
        <dbReference type="ChEBI" id="CHEBI:29108"/>
        <label>4</label>
    </ligand>
</feature>
<feature type="modified residue" description="Phosphoserine" evidence="2">
    <location>
        <position position="17"/>
    </location>
</feature>
<feature type="modified residue" description="Phosphoserine" evidence="2">
    <location>
        <position position="28"/>
    </location>
</feature>
<feature type="modified residue" description="Phosphoserine" evidence="2">
    <location>
        <position position="34"/>
    </location>
</feature>
<feature type="modified residue" description="Phosphoserine" evidence="2">
    <location>
        <position position="64"/>
    </location>
</feature>
<feature type="modified residue" description="Phosphothreonine" evidence="2">
    <location>
        <position position="100"/>
    </location>
</feature>
<feature type="modified residue" description="Phosphoserine" evidence="2">
    <location>
        <position position="118"/>
    </location>
</feature>
<feature type="modified residue" description="Phosphoserine" evidence="2">
    <location>
        <position position="217"/>
    </location>
</feature>
<feature type="modified residue" description="Phosphoserine" evidence="2">
    <location>
        <position position="220"/>
    </location>
</feature>
<feature type="modified residue" description="Phosphothreonine" evidence="2">
    <location>
        <position position="231"/>
    </location>
</feature>
<feature type="modified residue" description="Phosphoserine" evidence="2">
    <location>
        <position position="335"/>
    </location>
</feature>
<feature type="lipid moiety-binding region" description="N-myristoyl glycine" evidence="2">
    <location>
        <position position="2"/>
    </location>
</feature>
<feature type="lipid moiety-binding region" description="S-palmitoyl cysteine" evidence="2">
    <location>
        <position position="3"/>
    </location>
</feature>
<feature type="mutagenesis site" description="Induces a strong decrease in calcium-binding. Strongly affects kinase activity." evidence="8">
    <original>E</original>
    <variation>K</variation>
    <variation>Q</variation>
    <location>
        <position position="396"/>
    </location>
</feature>
<feature type="mutagenesis site" description="Almost abolishes in calcium-binding. Abolishes kinase activity." evidence="8">
    <original>E</original>
    <variation>K</variation>
    <variation>Q</variation>
    <location>
        <position position="440"/>
    </location>
</feature>
<feature type="mutagenesis site" description="Induces a slight decrease in calcium-binding and kinase activity." evidence="8">
    <original>E</original>
    <variation>K</variation>
    <variation>Q</variation>
    <location>
        <position position="476"/>
    </location>
</feature>
<feature type="mutagenesis site" description="Induces a slight decrease in calcium-binding and kinase activity." evidence="8">
    <original>E</original>
    <variation>K</variation>
    <variation>Q</variation>
    <location>
        <position position="510"/>
    </location>
</feature>
<protein>
    <recommendedName>
        <fullName>Calcium-dependent protein kinase 1</fullName>
        <ecNumber evidence="8 9">2.7.11.1</ecNumber>
    </recommendedName>
    <alternativeName>
        <fullName>PfCDPK1</fullName>
        <shortName>PfCPK</shortName>
    </alternativeName>
</protein>
<accession>P62343</accession>
<accession>Q27731</accession>
<keyword id="KW-0067">ATP-binding</keyword>
<keyword id="KW-0106">Calcium</keyword>
<keyword id="KW-1003">Cell membrane</keyword>
<keyword id="KW-0966">Cell projection</keyword>
<keyword id="KW-0969">Cilium</keyword>
<keyword id="KW-0963">Cytoplasm</keyword>
<keyword id="KW-0282">Flagellum</keyword>
<keyword id="KW-1032">Host cell membrane</keyword>
<keyword id="KW-1043">Host membrane</keyword>
<keyword id="KW-0418">Kinase</keyword>
<keyword id="KW-0449">Lipoprotein</keyword>
<keyword id="KW-0472">Membrane</keyword>
<keyword id="KW-0479">Metal-binding</keyword>
<keyword id="KW-0519">Myristate</keyword>
<keyword id="KW-0547">Nucleotide-binding</keyword>
<keyword id="KW-0564">Palmitate</keyword>
<keyword id="KW-0597">Phosphoprotein</keyword>
<keyword id="KW-0677">Repeat</keyword>
<keyword id="KW-0723">Serine/threonine-protein kinase</keyword>
<keyword id="KW-0808">Transferase</keyword>
<organism>
    <name type="scientific">Plasmodium falciparum (isolate K1 / Thailand)</name>
    <dbReference type="NCBI Taxonomy" id="5839"/>
    <lineage>
        <taxon>Eukaryota</taxon>
        <taxon>Sar</taxon>
        <taxon>Alveolata</taxon>
        <taxon>Apicomplexa</taxon>
        <taxon>Aconoidasida</taxon>
        <taxon>Haemosporida</taxon>
        <taxon>Plasmodiidae</taxon>
        <taxon>Plasmodium</taxon>
        <taxon>Plasmodium (Laverania)</taxon>
    </lineage>
</organism>